<protein>
    <recommendedName>
        <fullName>Nuclease SbcCD subunit D</fullName>
    </recommendedName>
</protein>
<name>SBCD_STAAE</name>
<reference key="1">
    <citation type="journal article" date="2008" name="J. Bacteriol.">
        <title>Genome sequence of Staphylococcus aureus strain Newman and comparative analysis of staphylococcal genomes: polymorphism and evolution of two major pathogenicity islands.</title>
        <authorList>
            <person name="Baba T."/>
            <person name="Bae T."/>
            <person name="Schneewind O."/>
            <person name="Takeuchi F."/>
            <person name="Hiramatsu K."/>
        </authorList>
    </citation>
    <scope>NUCLEOTIDE SEQUENCE [LARGE SCALE GENOMIC DNA]</scope>
    <source>
        <strain>Newman</strain>
    </source>
</reference>
<reference key="2">
    <citation type="journal article" date="2007" name="J. Bacteriol.">
        <title>The sbcDC locus mediates repression of type 5 capsule production as part of the SOS response in Staphylococcus aureus.</title>
        <authorList>
            <person name="Chen Z."/>
            <person name="Luong T.T."/>
            <person name="Lee C.Y."/>
        </authorList>
    </citation>
    <scope>FUNCTION IN THE REPRESSION OF TYPE 5 CAPSULE PRODUCTION AND SOS RESPONSE</scope>
    <scope>DEVELOPMENTAL STAGE</scope>
    <scope>INDUCTION BY CIPROFLOXACIN AND MITOMYCIN C</scope>
</reference>
<evidence type="ECO:0000250" key="1"/>
<evidence type="ECO:0000269" key="2">
    <source>
    </source>
</evidence>
<evidence type="ECO:0000305" key="3"/>
<gene>
    <name type="primary">sbcD</name>
    <name type="ordered locus">NWMN_1257</name>
</gene>
<comment type="function">
    <text evidence="1 2">SbcCD cleaves DNA hairpin structures. These structures can inhibit DNA replication and are intermediates in certain DNA recombination reactions. The complex acts as a 3'-&gt;5' double strand exonuclease that can open hairpins. It also has a 5' single-strand endonuclease activity (By similarity). Is involved in the repression of type 5 capsule production by down-regulating cap5 genes via arl-mgr pathway. Is probably part of the SOS regulon and involved in DNA recombination and repair.</text>
</comment>
<comment type="subunit">
    <text evidence="1">Heterodimer of SbcC and SbcD.</text>
</comment>
<comment type="developmental stage">
    <text evidence="2">Expressed very early in the exponential growth phase.</text>
</comment>
<comment type="induction">
    <text evidence="2">Induced by ciprofloxacin or mitomycin C in subinhibitory concentration.</text>
</comment>
<comment type="similarity">
    <text evidence="3">Belongs to the SbcD family.</text>
</comment>
<dbReference type="EMBL" id="AP009351">
    <property type="protein sequence ID" value="BAF67529.1"/>
    <property type="molecule type" value="Genomic_DNA"/>
</dbReference>
<dbReference type="RefSeq" id="WP_000691284.1">
    <property type="nucleotide sequence ID" value="NZ_JBBIAE010000001.1"/>
</dbReference>
<dbReference type="SMR" id="A6QGP7"/>
<dbReference type="KEGG" id="sae:NWMN_1257"/>
<dbReference type="HOGENOM" id="CLU_038045_0_1_9"/>
<dbReference type="Proteomes" id="UP000006386">
    <property type="component" value="Chromosome"/>
</dbReference>
<dbReference type="GO" id="GO:0008408">
    <property type="term" value="F:3'-5' exonuclease activity"/>
    <property type="evidence" value="ECO:0007669"/>
    <property type="project" value="InterPro"/>
</dbReference>
<dbReference type="GO" id="GO:0004519">
    <property type="term" value="F:endonuclease activity"/>
    <property type="evidence" value="ECO:0007669"/>
    <property type="project" value="UniProtKB-KW"/>
</dbReference>
<dbReference type="GO" id="GO:0006310">
    <property type="term" value="P:DNA recombination"/>
    <property type="evidence" value="ECO:0007669"/>
    <property type="project" value="UniProtKB-KW"/>
</dbReference>
<dbReference type="GO" id="GO:0006281">
    <property type="term" value="P:DNA repair"/>
    <property type="evidence" value="ECO:0007669"/>
    <property type="project" value="UniProtKB-KW"/>
</dbReference>
<dbReference type="GO" id="GO:0006260">
    <property type="term" value="P:DNA replication"/>
    <property type="evidence" value="ECO:0007669"/>
    <property type="project" value="UniProtKB-KW"/>
</dbReference>
<dbReference type="GO" id="GO:0009432">
    <property type="term" value="P:SOS response"/>
    <property type="evidence" value="ECO:0007669"/>
    <property type="project" value="UniProtKB-KW"/>
</dbReference>
<dbReference type="CDD" id="cd00840">
    <property type="entry name" value="MPP_Mre11_N"/>
    <property type="match status" value="1"/>
</dbReference>
<dbReference type="Gene3D" id="3.60.21.10">
    <property type="match status" value="1"/>
</dbReference>
<dbReference type="InterPro" id="IPR004843">
    <property type="entry name" value="Calcineurin-like_PHP_ApaH"/>
</dbReference>
<dbReference type="InterPro" id="IPR050535">
    <property type="entry name" value="DNA_Repair-Maintenance_Comp"/>
</dbReference>
<dbReference type="InterPro" id="IPR029052">
    <property type="entry name" value="Metallo-depent_PP-like"/>
</dbReference>
<dbReference type="InterPro" id="IPR041796">
    <property type="entry name" value="Mre11_N"/>
</dbReference>
<dbReference type="InterPro" id="IPR053381">
    <property type="entry name" value="SbcCD_nuclease"/>
</dbReference>
<dbReference type="InterPro" id="IPR004593">
    <property type="entry name" value="SbcD"/>
</dbReference>
<dbReference type="InterPro" id="IPR026843">
    <property type="entry name" value="SbcD_C"/>
</dbReference>
<dbReference type="NCBIfam" id="TIGR00619">
    <property type="entry name" value="sbcd"/>
    <property type="match status" value="1"/>
</dbReference>
<dbReference type="NCBIfam" id="NF041753">
    <property type="entry name" value="sbcd_Staph"/>
    <property type="match status" value="1"/>
</dbReference>
<dbReference type="PANTHER" id="PTHR30337">
    <property type="entry name" value="COMPONENT OF ATP-DEPENDENT DSDNA EXONUCLEASE"/>
    <property type="match status" value="1"/>
</dbReference>
<dbReference type="PANTHER" id="PTHR30337:SF0">
    <property type="entry name" value="NUCLEASE SBCCD SUBUNIT D"/>
    <property type="match status" value="1"/>
</dbReference>
<dbReference type="Pfam" id="PF00149">
    <property type="entry name" value="Metallophos"/>
    <property type="match status" value="1"/>
</dbReference>
<dbReference type="Pfam" id="PF12320">
    <property type="entry name" value="SbcD_C"/>
    <property type="match status" value="1"/>
</dbReference>
<dbReference type="SUPFAM" id="SSF56300">
    <property type="entry name" value="Metallo-dependent phosphatases"/>
    <property type="match status" value="1"/>
</dbReference>
<feature type="chain" id="PRO_0000338489" description="Nuclease SbcCD subunit D">
    <location>
        <begin position="1"/>
        <end position="373"/>
    </location>
</feature>
<proteinExistence type="evidence at protein level"/>
<organism>
    <name type="scientific">Staphylococcus aureus (strain Newman)</name>
    <dbReference type="NCBI Taxonomy" id="426430"/>
    <lineage>
        <taxon>Bacteria</taxon>
        <taxon>Bacillati</taxon>
        <taxon>Bacillota</taxon>
        <taxon>Bacilli</taxon>
        <taxon>Bacillales</taxon>
        <taxon>Staphylococcaceae</taxon>
        <taxon>Staphylococcus</taxon>
    </lineage>
</organism>
<sequence>MKIIHTADWHLGKILNGKQLLEDQAYILDMFVEKMKEEEPDIIVIAGDLYDTTYPSKDAIMLLEQAIGKLNLELRIPIIIISGNHDGKERLNYGASWFEHNQLFIRTDFTSINSPIEINGVNFYTLPYATVSEMKHYFEDDTIETHQQGITRCIETIAPEIDEDAVNILISHLTVQGGKTSDSERPLTIGTVESVQKGVFDIFDYVMLGHLHHPFSIEDDKIKYSGSLLQYSFSEAGQAKGYRRVTINDGIINDVFIPLKPLRQLEIISGEYNDVINEKVHVKNKDNYLHFKLKNMSHITDPMMSLKQIYPNTLALTNETFNYNEENNAIEISEKDDMSIIEMFYKHITDKELSDIQSKKIKNILENELRKED</sequence>
<accession>A6QGP7</accession>
<keyword id="KW-0227">DNA damage</keyword>
<keyword id="KW-0233">DNA recombination</keyword>
<keyword id="KW-0234">DNA repair</keyword>
<keyword id="KW-0235">DNA replication</keyword>
<keyword id="KW-0255">Endonuclease</keyword>
<keyword id="KW-0269">Exonuclease</keyword>
<keyword id="KW-0378">Hydrolase</keyword>
<keyword id="KW-0540">Nuclease</keyword>
<keyword id="KW-0742">SOS response</keyword>